<proteinExistence type="inferred from homology"/>
<protein>
    <recommendedName>
        <fullName evidence="1">Glycine dehydrogenase (decarboxylating)</fullName>
        <ecNumber evidence="1">1.4.4.2</ecNumber>
    </recommendedName>
    <alternativeName>
        <fullName evidence="1">Glycine cleavage system P-protein</fullName>
    </alternativeName>
    <alternativeName>
        <fullName evidence="1">Glycine decarboxylase</fullName>
    </alternativeName>
    <alternativeName>
        <fullName evidence="1">Glycine dehydrogenase (aminomethyl-transferring)</fullName>
    </alternativeName>
</protein>
<reference key="1">
    <citation type="submission" date="2007-02" db="EMBL/GenBank/DDBJ databases">
        <title>Complete sequence of chromosome of Shewanella baltica OS155.</title>
        <authorList>
            <consortium name="US DOE Joint Genome Institute"/>
            <person name="Copeland A."/>
            <person name="Lucas S."/>
            <person name="Lapidus A."/>
            <person name="Barry K."/>
            <person name="Detter J.C."/>
            <person name="Glavina del Rio T."/>
            <person name="Hammon N."/>
            <person name="Israni S."/>
            <person name="Dalin E."/>
            <person name="Tice H."/>
            <person name="Pitluck S."/>
            <person name="Sims D.R."/>
            <person name="Brettin T."/>
            <person name="Bruce D."/>
            <person name="Han C."/>
            <person name="Tapia R."/>
            <person name="Brainard J."/>
            <person name="Schmutz J."/>
            <person name="Larimer F."/>
            <person name="Land M."/>
            <person name="Hauser L."/>
            <person name="Kyrpides N."/>
            <person name="Mikhailova N."/>
            <person name="Brettar I."/>
            <person name="Klappenbach J."/>
            <person name="Konstantinidis K."/>
            <person name="Rodrigues J."/>
            <person name="Tiedje J."/>
            <person name="Richardson P."/>
        </authorList>
    </citation>
    <scope>NUCLEOTIDE SEQUENCE [LARGE SCALE GENOMIC DNA]</scope>
    <source>
        <strain>OS155 / ATCC BAA-1091</strain>
    </source>
</reference>
<gene>
    <name evidence="1" type="primary">gcvP</name>
    <name type="ordered locus">Sbal_0619</name>
</gene>
<feature type="chain" id="PRO_1000045607" description="Glycine dehydrogenase (decarboxylating)">
    <location>
        <begin position="1"/>
        <end position="962"/>
    </location>
</feature>
<feature type="modified residue" description="N6-(pyridoxal phosphate)lysine" evidence="1">
    <location>
        <position position="709"/>
    </location>
</feature>
<evidence type="ECO:0000255" key="1">
    <source>
        <dbReference type="HAMAP-Rule" id="MF_00711"/>
    </source>
</evidence>
<accession>A3D085</accession>
<organism>
    <name type="scientific">Shewanella baltica (strain OS155 / ATCC BAA-1091)</name>
    <dbReference type="NCBI Taxonomy" id="325240"/>
    <lineage>
        <taxon>Bacteria</taxon>
        <taxon>Pseudomonadati</taxon>
        <taxon>Pseudomonadota</taxon>
        <taxon>Gammaproteobacteria</taxon>
        <taxon>Alteromonadales</taxon>
        <taxon>Shewanellaceae</taxon>
        <taxon>Shewanella</taxon>
    </lineage>
</organism>
<keyword id="KW-0560">Oxidoreductase</keyword>
<keyword id="KW-0663">Pyridoxal phosphate</keyword>
<keyword id="KW-1185">Reference proteome</keyword>
<sequence>MTKQTLTQLEQHDLFLRRHIGPDSNQQQAMLNFVGAESLEDLTAQIVPESIRLSQDLSIGDSCGEAEGIAYIRGLADQNQVFKSYIGMGYYGTQVPNVILRNVFENPGWYTAYTPYQPEIAQGRLEAILNFQQVSMDLTGLDLASASLLDEATAAAEAMALAKRVSKAKKANIFFVADDVFPQTLDVVKTRAECFGFEVVVGPASEAVNYELFGALFQYTNRFGQITDFTELFATLRAKNVIVTVAADIMSLVLLKSPGSMGADVVFGSAQRFGVPMGFGGPHAAFFVARDEHKRSMPGRIIGVSKDARGNRALRMAMQTREQHIRREKANSNICTAQILLANMASFYAVFHGPDGLKTIASRINRFADILAAGLQAKGVSLVNSTWFDTISIKGLDVAAVNARALAAEMNLRFDADGTVGVSLDETTLRTDIEALFDVILGAGHGLDVAALDAQIVSQGSQSIPAALVRQDAILSHPTFNRYQSETEMMRYIKRLESKDLALNYSMISLGSCTMKLNAAVEMLPVSWPEFANMHPFSPLDQAKGYTQLIEELSTWLVNITGYDAVCIQPNSGAQGEYAGLLAIKKYHESRGDAHRNICLIPQSAHGTNPASAQLAGMQVVVTACDKQGNVDLDDLKTKAAEVAGNLSCIMITYPSTHGVYEESIREICDIVHQHGGQVYLDGANMNAQVGLTSPGFIGADVSHLNLHKTFAIPHGGGGPGMGPIGVKSHLAPFVAGHVVVKPGRESDHNGAVSAAPYGSAGILPISWMYIKLLGSNGLKKSTQTALLNANYVMKKLSEHYPVLFRGRNDRVAHECIIDLRPLKEASGVTEMDIAKRLNDYGFHAPTMSFPVAGTLMIEPTESESKVELDRFIDAMVSIRAEIAKVESGEWPVDNNPLHNAPHTMADIMDPEFDTRPYSREVAVFPSAAVRTNKFWPTVNRIDDVYGDRNLMCSCAPLSDYE</sequence>
<name>GCSP_SHEB5</name>
<dbReference type="EC" id="1.4.4.2" evidence="1"/>
<dbReference type="EMBL" id="CP000563">
    <property type="protein sequence ID" value="ABN60148.1"/>
    <property type="molecule type" value="Genomic_DNA"/>
</dbReference>
<dbReference type="RefSeq" id="WP_011845767.1">
    <property type="nucleotide sequence ID" value="NC_009052.1"/>
</dbReference>
<dbReference type="SMR" id="A3D085"/>
<dbReference type="STRING" id="325240.Sbal_0619"/>
<dbReference type="KEGG" id="sbl:Sbal_0619"/>
<dbReference type="HOGENOM" id="CLU_004620_3_2_6"/>
<dbReference type="OrthoDB" id="9801272at2"/>
<dbReference type="Proteomes" id="UP000001557">
    <property type="component" value="Chromosome"/>
</dbReference>
<dbReference type="GO" id="GO:0005829">
    <property type="term" value="C:cytosol"/>
    <property type="evidence" value="ECO:0007669"/>
    <property type="project" value="TreeGrafter"/>
</dbReference>
<dbReference type="GO" id="GO:0005960">
    <property type="term" value="C:glycine cleavage complex"/>
    <property type="evidence" value="ECO:0007669"/>
    <property type="project" value="TreeGrafter"/>
</dbReference>
<dbReference type="GO" id="GO:0016594">
    <property type="term" value="F:glycine binding"/>
    <property type="evidence" value="ECO:0007669"/>
    <property type="project" value="TreeGrafter"/>
</dbReference>
<dbReference type="GO" id="GO:0004375">
    <property type="term" value="F:glycine dehydrogenase (decarboxylating) activity"/>
    <property type="evidence" value="ECO:0007669"/>
    <property type="project" value="UniProtKB-EC"/>
</dbReference>
<dbReference type="GO" id="GO:0030170">
    <property type="term" value="F:pyridoxal phosphate binding"/>
    <property type="evidence" value="ECO:0007669"/>
    <property type="project" value="TreeGrafter"/>
</dbReference>
<dbReference type="GO" id="GO:0019464">
    <property type="term" value="P:glycine decarboxylation via glycine cleavage system"/>
    <property type="evidence" value="ECO:0007669"/>
    <property type="project" value="UniProtKB-UniRule"/>
</dbReference>
<dbReference type="CDD" id="cd00613">
    <property type="entry name" value="GDC-P"/>
    <property type="match status" value="2"/>
</dbReference>
<dbReference type="FunFam" id="3.40.640.10:FF:000005">
    <property type="entry name" value="Glycine dehydrogenase (decarboxylating), mitochondrial"/>
    <property type="match status" value="1"/>
</dbReference>
<dbReference type="FunFam" id="3.90.1150.10:FF:000007">
    <property type="entry name" value="Glycine dehydrogenase (decarboxylating), mitochondrial"/>
    <property type="match status" value="1"/>
</dbReference>
<dbReference type="FunFam" id="3.40.640.10:FF:000007">
    <property type="entry name" value="glycine dehydrogenase (Decarboxylating), mitochondrial"/>
    <property type="match status" value="1"/>
</dbReference>
<dbReference type="Gene3D" id="3.90.1150.10">
    <property type="entry name" value="Aspartate Aminotransferase, domain 1"/>
    <property type="match status" value="2"/>
</dbReference>
<dbReference type="Gene3D" id="3.40.640.10">
    <property type="entry name" value="Type I PLP-dependent aspartate aminotransferase-like (Major domain)"/>
    <property type="match status" value="2"/>
</dbReference>
<dbReference type="HAMAP" id="MF_00711">
    <property type="entry name" value="GcvP"/>
    <property type="match status" value="1"/>
</dbReference>
<dbReference type="InterPro" id="IPR003437">
    <property type="entry name" value="GcvP"/>
</dbReference>
<dbReference type="InterPro" id="IPR049316">
    <property type="entry name" value="GDC-P_C"/>
</dbReference>
<dbReference type="InterPro" id="IPR049315">
    <property type="entry name" value="GDC-P_N"/>
</dbReference>
<dbReference type="InterPro" id="IPR020581">
    <property type="entry name" value="GDC_P"/>
</dbReference>
<dbReference type="InterPro" id="IPR015424">
    <property type="entry name" value="PyrdxlP-dep_Trfase"/>
</dbReference>
<dbReference type="InterPro" id="IPR015421">
    <property type="entry name" value="PyrdxlP-dep_Trfase_major"/>
</dbReference>
<dbReference type="InterPro" id="IPR015422">
    <property type="entry name" value="PyrdxlP-dep_Trfase_small"/>
</dbReference>
<dbReference type="NCBIfam" id="TIGR00461">
    <property type="entry name" value="gcvP"/>
    <property type="match status" value="1"/>
</dbReference>
<dbReference type="NCBIfam" id="NF003346">
    <property type="entry name" value="PRK04366.1"/>
    <property type="match status" value="1"/>
</dbReference>
<dbReference type="PANTHER" id="PTHR11773:SF13">
    <property type="entry name" value="GLYCINE DEHYDROGENASE (DECARBOXYLATING)"/>
    <property type="match status" value="1"/>
</dbReference>
<dbReference type="PANTHER" id="PTHR11773">
    <property type="entry name" value="GLYCINE DEHYDROGENASE, DECARBOXYLATING"/>
    <property type="match status" value="1"/>
</dbReference>
<dbReference type="Pfam" id="PF21478">
    <property type="entry name" value="GcvP2_C"/>
    <property type="match status" value="1"/>
</dbReference>
<dbReference type="Pfam" id="PF02347">
    <property type="entry name" value="GDC-P"/>
    <property type="match status" value="2"/>
</dbReference>
<dbReference type="SUPFAM" id="SSF53383">
    <property type="entry name" value="PLP-dependent transferases"/>
    <property type="match status" value="2"/>
</dbReference>
<comment type="function">
    <text evidence="1">The glycine cleavage system catalyzes the degradation of glycine. The P protein binds the alpha-amino group of glycine through its pyridoxal phosphate cofactor; CO(2) is released and the remaining methylamine moiety is then transferred to the lipoamide cofactor of the H protein.</text>
</comment>
<comment type="catalytic activity">
    <reaction evidence="1">
        <text>N(6)-[(R)-lipoyl]-L-lysyl-[glycine-cleavage complex H protein] + glycine + H(+) = N(6)-[(R)-S(8)-aminomethyldihydrolipoyl]-L-lysyl-[glycine-cleavage complex H protein] + CO2</text>
        <dbReference type="Rhea" id="RHEA:24304"/>
        <dbReference type="Rhea" id="RHEA-COMP:10494"/>
        <dbReference type="Rhea" id="RHEA-COMP:10495"/>
        <dbReference type="ChEBI" id="CHEBI:15378"/>
        <dbReference type="ChEBI" id="CHEBI:16526"/>
        <dbReference type="ChEBI" id="CHEBI:57305"/>
        <dbReference type="ChEBI" id="CHEBI:83099"/>
        <dbReference type="ChEBI" id="CHEBI:83143"/>
        <dbReference type="EC" id="1.4.4.2"/>
    </reaction>
</comment>
<comment type="cofactor">
    <cofactor evidence="1">
        <name>pyridoxal 5'-phosphate</name>
        <dbReference type="ChEBI" id="CHEBI:597326"/>
    </cofactor>
</comment>
<comment type="subunit">
    <text evidence="1">The glycine cleavage system is composed of four proteins: P, T, L and H.</text>
</comment>
<comment type="similarity">
    <text evidence="1">Belongs to the GcvP family.</text>
</comment>